<organism>
    <name type="scientific">Saccharolobus islandicus (strain Y.G.57.14 / Yellowstone #1)</name>
    <name type="common">Sulfolobus islandicus</name>
    <dbReference type="NCBI Taxonomy" id="439386"/>
    <lineage>
        <taxon>Archaea</taxon>
        <taxon>Thermoproteota</taxon>
        <taxon>Thermoprotei</taxon>
        <taxon>Sulfolobales</taxon>
        <taxon>Sulfolobaceae</taxon>
        <taxon>Saccharolobus</taxon>
    </lineage>
</organism>
<feature type="chain" id="PRO_1000209796" description="A-type ATP synthase subunit D">
    <location>
        <begin position="1"/>
        <end position="213"/>
    </location>
</feature>
<name>AATD_SACI7</name>
<reference key="1">
    <citation type="journal article" date="2009" name="Proc. Natl. Acad. Sci. U.S.A.">
        <title>Biogeography of the Sulfolobus islandicus pan-genome.</title>
        <authorList>
            <person name="Reno M.L."/>
            <person name="Held N.L."/>
            <person name="Fields C.J."/>
            <person name="Burke P.V."/>
            <person name="Whitaker R.J."/>
        </authorList>
    </citation>
    <scope>NUCLEOTIDE SEQUENCE [LARGE SCALE GENOMIC DNA]</scope>
    <source>
        <strain>Y.G.57.14 / Yellowstone #1</strain>
    </source>
</reference>
<accession>C3NEU1</accession>
<gene>
    <name evidence="1" type="primary">atpD</name>
    <name type="ordered locus">YG5714_1568</name>
</gene>
<evidence type="ECO:0000255" key="1">
    <source>
        <dbReference type="HAMAP-Rule" id="MF_00271"/>
    </source>
</evidence>
<proteinExistence type="inferred from homology"/>
<keyword id="KW-0066">ATP synthesis</keyword>
<keyword id="KW-1003">Cell membrane</keyword>
<keyword id="KW-0375">Hydrogen ion transport</keyword>
<keyword id="KW-0406">Ion transport</keyword>
<keyword id="KW-0472">Membrane</keyword>
<keyword id="KW-0813">Transport</keyword>
<dbReference type="EMBL" id="CP001403">
    <property type="protein sequence ID" value="ACP45830.1"/>
    <property type="molecule type" value="Genomic_DNA"/>
</dbReference>
<dbReference type="RefSeq" id="WP_012711557.1">
    <property type="nucleotide sequence ID" value="NC_012622.1"/>
</dbReference>
<dbReference type="SMR" id="C3NEU1"/>
<dbReference type="KEGG" id="siy:YG5714_1568"/>
<dbReference type="HOGENOM" id="CLU_069688_2_2_2"/>
<dbReference type="Proteomes" id="UP000002308">
    <property type="component" value="Chromosome"/>
</dbReference>
<dbReference type="GO" id="GO:0005886">
    <property type="term" value="C:plasma membrane"/>
    <property type="evidence" value="ECO:0007669"/>
    <property type="project" value="UniProtKB-SubCell"/>
</dbReference>
<dbReference type="GO" id="GO:0005524">
    <property type="term" value="F:ATP binding"/>
    <property type="evidence" value="ECO:0007669"/>
    <property type="project" value="UniProtKB-UniRule"/>
</dbReference>
<dbReference type="GO" id="GO:0046933">
    <property type="term" value="F:proton-transporting ATP synthase activity, rotational mechanism"/>
    <property type="evidence" value="ECO:0007669"/>
    <property type="project" value="UniProtKB-UniRule"/>
</dbReference>
<dbReference type="GO" id="GO:0046961">
    <property type="term" value="F:proton-transporting ATPase activity, rotational mechanism"/>
    <property type="evidence" value="ECO:0007669"/>
    <property type="project" value="InterPro"/>
</dbReference>
<dbReference type="GO" id="GO:0042777">
    <property type="term" value="P:proton motive force-driven plasma membrane ATP synthesis"/>
    <property type="evidence" value="ECO:0007669"/>
    <property type="project" value="UniProtKB-UniRule"/>
</dbReference>
<dbReference type="FunFam" id="1.10.287.3240:FF:000012">
    <property type="entry name" value="V-type ATP synthase subunit D"/>
    <property type="match status" value="1"/>
</dbReference>
<dbReference type="Gene3D" id="1.10.287.3240">
    <property type="match status" value="1"/>
</dbReference>
<dbReference type="HAMAP" id="MF_00271">
    <property type="entry name" value="ATP_synth_D_arch"/>
    <property type="match status" value="1"/>
</dbReference>
<dbReference type="InterPro" id="IPR002699">
    <property type="entry name" value="V_ATPase_D"/>
</dbReference>
<dbReference type="NCBIfam" id="NF001544">
    <property type="entry name" value="PRK00373.1-3"/>
    <property type="match status" value="1"/>
</dbReference>
<dbReference type="NCBIfam" id="TIGR00309">
    <property type="entry name" value="V_ATPase_subD"/>
    <property type="match status" value="1"/>
</dbReference>
<dbReference type="PANTHER" id="PTHR11671">
    <property type="entry name" value="V-TYPE ATP SYNTHASE SUBUNIT D"/>
    <property type="match status" value="1"/>
</dbReference>
<dbReference type="Pfam" id="PF01813">
    <property type="entry name" value="ATP-synt_D"/>
    <property type="match status" value="1"/>
</dbReference>
<sequence length="213" mass="24963">MSQKVLPTKINLIQFRRQLRLITVIKRLLENKREVLLLYLRTYASEYEKIYNEVNEEMKKVYESYLQAVASEGISNIEEIALSQKPSLEVSSSIKVIFGVKVPTIKLDKSTIPPKPFSDVETSPYLSESYEEMTEALNKIIELVELESTIRSLVSELRKTQRLINSIDNYILPFYRGSIKFIKQILEDRQREEFSRLKIIRRILQRRRESGSG</sequence>
<comment type="function">
    <text evidence="1">Component of the A-type ATP synthase that produces ATP from ADP in the presence of a proton gradient across the membrane.</text>
</comment>
<comment type="subunit">
    <text evidence="1">Has multiple subunits with at least A(3), B(3), C, D, E, F, H, I and proteolipid K(x).</text>
</comment>
<comment type="subcellular location">
    <subcellularLocation>
        <location evidence="1">Cell membrane</location>
        <topology evidence="1">Peripheral membrane protein</topology>
    </subcellularLocation>
</comment>
<comment type="similarity">
    <text evidence="1">Belongs to the V-ATPase D subunit family.</text>
</comment>
<protein>
    <recommendedName>
        <fullName evidence="1">A-type ATP synthase subunit D</fullName>
    </recommendedName>
</protein>